<keyword id="KW-0963">Cytoplasm</keyword>
<keyword id="KW-0489">Methyltransferase</keyword>
<keyword id="KW-1185">Reference proteome</keyword>
<keyword id="KW-0698">rRNA processing</keyword>
<keyword id="KW-0949">S-adenosyl-L-methionine</keyword>
<keyword id="KW-0808">Transferase</keyword>
<comment type="function">
    <text evidence="1">Specifically methylates the N4 position of cytidine in position 1402 (C1402) of 16S rRNA.</text>
</comment>
<comment type="catalytic activity">
    <reaction evidence="1">
        <text>cytidine(1402) in 16S rRNA + S-adenosyl-L-methionine = N(4)-methylcytidine(1402) in 16S rRNA + S-adenosyl-L-homocysteine + H(+)</text>
        <dbReference type="Rhea" id="RHEA:42928"/>
        <dbReference type="Rhea" id="RHEA-COMP:10286"/>
        <dbReference type="Rhea" id="RHEA-COMP:10287"/>
        <dbReference type="ChEBI" id="CHEBI:15378"/>
        <dbReference type="ChEBI" id="CHEBI:57856"/>
        <dbReference type="ChEBI" id="CHEBI:59789"/>
        <dbReference type="ChEBI" id="CHEBI:74506"/>
        <dbReference type="ChEBI" id="CHEBI:82748"/>
        <dbReference type="EC" id="2.1.1.199"/>
    </reaction>
</comment>
<comment type="subcellular location">
    <subcellularLocation>
        <location evidence="1">Cytoplasm</location>
    </subcellularLocation>
</comment>
<comment type="similarity">
    <text evidence="1">Belongs to the methyltransferase superfamily. RsmH family.</text>
</comment>
<organism>
    <name type="scientific">Nitrosococcus oceani (strain ATCC 19707 / BCRC 17464 / JCM 30415 / NCIMB 11848 / C-107)</name>
    <dbReference type="NCBI Taxonomy" id="323261"/>
    <lineage>
        <taxon>Bacteria</taxon>
        <taxon>Pseudomonadati</taxon>
        <taxon>Pseudomonadota</taxon>
        <taxon>Gammaproteobacteria</taxon>
        <taxon>Chromatiales</taxon>
        <taxon>Chromatiaceae</taxon>
        <taxon>Nitrosococcus</taxon>
    </lineage>
</organism>
<evidence type="ECO:0000255" key="1">
    <source>
        <dbReference type="HAMAP-Rule" id="MF_01007"/>
    </source>
</evidence>
<protein>
    <recommendedName>
        <fullName evidence="1">Ribosomal RNA small subunit methyltransferase H</fullName>
        <ecNumber evidence="1">2.1.1.199</ecNumber>
    </recommendedName>
    <alternativeName>
        <fullName evidence="1">16S rRNA m(4)C1402 methyltransferase</fullName>
    </alternativeName>
    <alternativeName>
        <fullName evidence="1">rRNA (cytosine-N(4)-)-methyltransferase RsmH</fullName>
    </alternativeName>
</protein>
<feature type="chain" id="PRO_0000223550" description="Ribosomal RNA small subunit methyltransferase H">
    <location>
        <begin position="1"/>
        <end position="315"/>
    </location>
</feature>
<feature type="binding site" evidence="1">
    <location>
        <begin position="37"/>
        <end position="39"/>
    </location>
    <ligand>
        <name>S-adenosyl-L-methionine</name>
        <dbReference type="ChEBI" id="CHEBI:59789"/>
    </ligand>
</feature>
<feature type="binding site" evidence="1">
    <location>
        <position position="57"/>
    </location>
    <ligand>
        <name>S-adenosyl-L-methionine</name>
        <dbReference type="ChEBI" id="CHEBI:59789"/>
    </ligand>
</feature>
<feature type="binding site" evidence="1">
    <location>
        <position position="105"/>
    </location>
    <ligand>
        <name>S-adenosyl-L-methionine</name>
        <dbReference type="ChEBI" id="CHEBI:59789"/>
    </ligand>
</feature>
<feature type="binding site" evidence="1">
    <location>
        <position position="112"/>
    </location>
    <ligand>
        <name>S-adenosyl-L-methionine</name>
        <dbReference type="ChEBI" id="CHEBI:59789"/>
    </ligand>
</feature>
<accession>Q3J781</accession>
<gene>
    <name evidence="1" type="primary">rsmH</name>
    <name type="synonym">mraW</name>
    <name type="ordered locus">Noc_2869</name>
</gene>
<name>RSMH_NITOC</name>
<proteinExistence type="inferred from homology"/>
<sequence>MDNNEISSHQPVLLREAIQALAIRRDGLYIDGTFGRGGHAQAILAALSSEGRLLGVDKDPAAIAAGHALAQKDGRFTIVQASIGDLARVVSERGWLKRINGVLFDLGVSSPQLESAERGFSFLRDGPLDMRMNPTVGQSAAEWLANAKEKEIAEVLRVYGEERYCRRIARAIIQARELNSLTRTKQLAEVVAKAIPRWERRMHPATRSFQAIRIFINHELEELRAALEQALAALAVKGRLAVISFHSLEDRIVKRFFREKARGEELPPDLPVMQKDFQQASLKVLGKPIWPVPEEIAHNPRARSARLRVAEKQTY</sequence>
<reference key="1">
    <citation type="journal article" date="2006" name="Appl. Environ. Microbiol.">
        <title>Complete genome sequence of the marine, chemolithoautotrophic, ammonia-oxidizing bacterium Nitrosococcus oceani ATCC 19707.</title>
        <authorList>
            <person name="Klotz M.G."/>
            <person name="Arp D.J."/>
            <person name="Chain P.S.G."/>
            <person name="El-Sheikh A.F."/>
            <person name="Hauser L.J."/>
            <person name="Hommes N.G."/>
            <person name="Larimer F.W."/>
            <person name="Malfatti S.A."/>
            <person name="Norton J.M."/>
            <person name="Poret-Peterson A.T."/>
            <person name="Vergez L.M."/>
            <person name="Ward B.B."/>
        </authorList>
    </citation>
    <scope>NUCLEOTIDE SEQUENCE [LARGE SCALE GENOMIC DNA]</scope>
    <source>
        <strain>ATCC 19707 / BCRC 17464 / JCM 30415 / NCIMB 11848 / C-107</strain>
    </source>
</reference>
<dbReference type="EC" id="2.1.1.199" evidence="1"/>
<dbReference type="EMBL" id="CP000127">
    <property type="protein sequence ID" value="ABA59315.1"/>
    <property type="molecule type" value="Genomic_DNA"/>
</dbReference>
<dbReference type="RefSeq" id="WP_002812352.1">
    <property type="nucleotide sequence ID" value="NC_007484.1"/>
</dbReference>
<dbReference type="SMR" id="Q3J781"/>
<dbReference type="FunCoup" id="Q3J781">
    <property type="interactions" value="575"/>
</dbReference>
<dbReference type="STRING" id="323261.Noc_2869"/>
<dbReference type="KEGG" id="noc:Noc_2869"/>
<dbReference type="eggNOG" id="COG0275">
    <property type="taxonomic scope" value="Bacteria"/>
</dbReference>
<dbReference type="HOGENOM" id="CLU_038422_2_0_6"/>
<dbReference type="InParanoid" id="Q3J781"/>
<dbReference type="Proteomes" id="UP000006838">
    <property type="component" value="Chromosome"/>
</dbReference>
<dbReference type="GO" id="GO:0005737">
    <property type="term" value="C:cytoplasm"/>
    <property type="evidence" value="ECO:0007669"/>
    <property type="project" value="UniProtKB-SubCell"/>
</dbReference>
<dbReference type="GO" id="GO:0071424">
    <property type="term" value="F:rRNA (cytosine-N4-)-methyltransferase activity"/>
    <property type="evidence" value="ECO:0007669"/>
    <property type="project" value="UniProtKB-UniRule"/>
</dbReference>
<dbReference type="GO" id="GO:0070475">
    <property type="term" value="P:rRNA base methylation"/>
    <property type="evidence" value="ECO:0007669"/>
    <property type="project" value="UniProtKB-UniRule"/>
</dbReference>
<dbReference type="FunFam" id="1.10.150.170:FF:000001">
    <property type="entry name" value="Ribosomal RNA small subunit methyltransferase H"/>
    <property type="match status" value="1"/>
</dbReference>
<dbReference type="Gene3D" id="1.10.150.170">
    <property type="entry name" value="Putative methyltransferase TM0872, insert domain"/>
    <property type="match status" value="1"/>
</dbReference>
<dbReference type="Gene3D" id="3.40.50.150">
    <property type="entry name" value="Vaccinia Virus protein VP39"/>
    <property type="match status" value="1"/>
</dbReference>
<dbReference type="HAMAP" id="MF_01007">
    <property type="entry name" value="16SrRNA_methyltr_H"/>
    <property type="match status" value="1"/>
</dbReference>
<dbReference type="InterPro" id="IPR002903">
    <property type="entry name" value="RsmH"/>
</dbReference>
<dbReference type="InterPro" id="IPR023397">
    <property type="entry name" value="SAM-dep_MeTrfase_MraW_recog"/>
</dbReference>
<dbReference type="InterPro" id="IPR029063">
    <property type="entry name" value="SAM-dependent_MTases_sf"/>
</dbReference>
<dbReference type="NCBIfam" id="TIGR00006">
    <property type="entry name" value="16S rRNA (cytosine(1402)-N(4))-methyltransferase RsmH"/>
    <property type="match status" value="1"/>
</dbReference>
<dbReference type="PANTHER" id="PTHR11265:SF0">
    <property type="entry name" value="12S RRNA N4-METHYLCYTIDINE METHYLTRANSFERASE"/>
    <property type="match status" value="1"/>
</dbReference>
<dbReference type="PANTHER" id="PTHR11265">
    <property type="entry name" value="S-ADENOSYL-METHYLTRANSFERASE MRAW"/>
    <property type="match status" value="1"/>
</dbReference>
<dbReference type="Pfam" id="PF01795">
    <property type="entry name" value="Methyltransf_5"/>
    <property type="match status" value="1"/>
</dbReference>
<dbReference type="PIRSF" id="PIRSF004486">
    <property type="entry name" value="MraW"/>
    <property type="match status" value="1"/>
</dbReference>
<dbReference type="SUPFAM" id="SSF81799">
    <property type="entry name" value="Putative methyltransferase TM0872, insert domain"/>
    <property type="match status" value="1"/>
</dbReference>
<dbReference type="SUPFAM" id="SSF53335">
    <property type="entry name" value="S-adenosyl-L-methionine-dependent methyltransferases"/>
    <property type="match status" value="1"/>
</dbReference>